<dbReference type="EMBL" id="U31902">
    <property type="protein sequence ID" value="AAA75176.1"/>
    <property type="molecule type" value="Genomic_DNA"/>
</dbReference>
<dbReference type="PIR" id="T46879">
    <property type="entry name" value="T46879"/>
</dbReference>
<dbReference type="RefSeq" id="WP_011746913.1">
    <property type="nucleotide sequence ID" value="NZ_JAOSHR010000002.1"/>
</dbReference>
<dbReference type="SMR" id="Q59660"/>
<dbReference type="GeneID" id="93451793"/>
<dbReference type="OMA" id="YFARPFP"/>
<dbReference type="UniPathway" id="UPA00223"/>
<dbReference type="GO" id="GO:0005886">
    <property type="term" value="C:plasma membrane"/>
    <property type="evidence" value="ECO:0007669"/>
    <property type="project" value="UniProtKB-SubCell"/>
</dbReference>
<dbReference type="GO" id="GO:0020037">
    <property type="term" value="F:heme binding"/>
    <property type="evidence" value="ECO:0007669"/>
    <property type="project" value="InterPro"/>
</dbReference>
<dbReference type="GO" id="GO:0046872">
    <property type="term" value="F:metal ion binding"/>
    <property type="evidence" value="ECO:0007669"/>
    <property type="project" value="UniProtKB-KW"/>
</dbReference>
<dbReference type="GO" id="GO:0006099">
    <property type="term" value="P:tricarboxylic acid cycle"/>
    <property type="evidence" value="ECO:0007669"/>
    <property type="project" value="UniProtKB-UniPathway"/>
</dbReference>
<dbReference type="CDD" id="cd03495">
    <property type="entry name" value="SQR_TypeC_SdhD_like"/>
    <property type="match status" value="1"/>
</dbReference>
<dbReference type="Gene3D" id="1.20.1300.10">
    <property type="entry name" value="Fumarate reductase/succinate dehydrogenase, transmembrane subunit"/>
    <property type="match status" value="1"/>
</dbReference>
<dbReference type="InterPro" id="IPR034804">
    <property type="entry name" value="SQR/QFR_C/D"/>
</dbReference>
<dbReference type="InterPro" id="IPR014312">
    <property type="entry name" value="Succ_DH_anchor"/>
</dbReference>
<dbReference type="InterPro" id="IPR000701">
    <property type="entry name" value="SuccDH_FuR_B_TM-su"/>
</dbReference>
<dbReference type="NCBIfam" id="TIGR02968">
    <property type="entry name" value="succ_dehyd_anc"/>
    <property type="match status" value="1"/>
</dbReference>
<dbReference type="Pfam" id="PF01127">
    <property type="entry name" value="Sdh_cyt"/>
    <property type="match status" value="1"/>
</dbReference>
<dbReference type="SUPFAM" id="SSF81343">
    <property type="entry name" value="Fumarate reductase respiratory complex transmembrane subunits"/>
    <property type="match status" value="1"/>
</dbReference>
<name>DHSD_PARDE</name>
<keyword id="KW-0997">Cell inner membrane</keyword>
<keyword id="KW-1003">Cell membrane</keyword>
<keyword id="KW-0249">Electron transport</keyword>
<keyword id="KW-0349">Heme</keyword>
<keyword id="KW-0408">Iron</keyword>
<keyword id="KW-0472">Membrane</keyword>
<keyword id="KW-0479">Metal-binding</keyword>
<keyword id="KW-0812">Transmembrane</keyword>
<keyword id="KW-1133">Transmembrane helix</keyword>
<keyword id="KW-0813">Transport</keyword>
<keyword id="KW-0816">Tricarboxylic acid cycle</keyword>
<comment type="function">
    <text evidence="1">Membrane-anchoring subunit of succinate dehydrogenase (SDH).</text>
</comment>
<comment type="cofactor">
    <cofactor evidence="1">
        <name>heme</name>
        <dbReference type="ChEBI" id="CHEBI:30413"/>
    </cofactor>
    <text evidence="1">The heme is bound between the two transmembrane subunits.</text>
</comment>
<comment type="pathway">
    <text>Carbohydrate metabolism; tricarboxylic acid cycle.</text>
</comment>
<comment type="subunit">
    <text evidence="1">Part of an enzyme complex containing four subunits: a flavoprotein, an iron-sulfur protein, plus two membrane-anchoring proteins, SdhC and SdhD.</text>
</comment>
<comment type="subcellular location">
    <subcellularLocation>
        <location>Cell inner membrane</location>
        <topology>Multi-pass membrane protein</topology>
    </subcellularLocation>
</comment>
<reference key="1">
    <citation type="submission" date="1995-09" db="EMBL/GenBank/DDBJ databases">
        <title>Cloning, sequencing, and expression of the succinate-ubiquinone oxidoreductase (SdhCDAB) operon from Paracoccus denitrificans.</title>
        <authorList>
            <person name="Dickins M.A."/>
            <person name="Dhawan T."/>
            <person name="Gunsalus R.P."/>
            <person name="Schroeder I."/>
            <person name="Cecchini G."/>
        </authorList>
    </citation>
    <scope>NUCLEOTIDE SEQUENCE [GENOMIC DNA]</scope>
    <source>
        <strain>ATCC 13543 / NRRL B-3784 / NRC 449</strain>
    </source>
</reference>
<organism>
    <name type="scientific">Paracoccus denitrificans</name>
    <dbReference type="NCBI Taxonomy" id="266"/>
    <lineage>
        <taxon>Bacteria</taxon>
        <taxon>Pseudomonadati</taxon>
        <taxon>Pseudomonadota</taxon>
        <taxon>Alphaproteobacteria</taxon>
        <taxon>Rhodobacterales</taxon>
        <taxon>Paracoccaceae</taxon>
        <taxon>Paracoccus</taxon>
    </lineage>
</organism>
<evidence type="ECO:0000250" key="1"/>
<protein>
    <recommendedName>
        <fullName>Succinate dehydrogenase hydrophobic membrane anchor subunit</fullName>
    </recommendedName>
</protein>
<sequence length="129" mass="13934">MRYITPRKAAEGLGSAHEGTQHHWAMTVSAVALTVLTPLFMIVVARAIGLSQEQLLAYFGRPFPALITALFVIVGMVHFIKGTRIMIDDYFQGGTRKAAIIFSVIFGWAVIAAAVYALARMGLGAIVVL</sequence>
<gene>
    <name type="primary">sdhD</name>
</gene>
<proteinExistence type="inferred from homology"/>
<feature type="chain" id="PRO_0000158676" description="Succinate dehydrogenase hydrophobic membrane anchor subunit">
    <location>
        <begin position="1"/>
        <end position="129"/>
    </location>
</feature>
<feature type="topological domain" description="Cytoplasmic" evidence="1">
    <location>
        <begin position="1"/>
        <end position="22"/>
    </location>
</feature>
<feature type="transmembrane region" description="Helical" evidence="1">
    <location>
        <begin position="23"/>
        <end position="43"/>
    </location>
</feature>
<feature type="topological domain" description="Periplasmic" evidence="1">
    <location>
        <begin position="44"/>
        <end position="65"/>
    </location>
</feature>
<feature type="transmembrane region" description="Helical" evidence="1">
    <location>
        <begin position="66"/>
        <end position="87"/>
    </location>
</feature>
<feature type="topological domain" description="Cytoplasmic" evidence="1">
    <location>
        <begin position="88"/>
        <end position="97"/>
    </location>
</feature>
<feature type="transmembrane region" description="Helical" evidence="1">
    <location>
        <begin position="98"/>
        <end position="122"/>
    </location>
</feature>
<feature type="binding site" description="axial binding residue" evidence="1">
    <location>
        <position position="78"/>
    </location>
    <ligand>
        <name>heme</name>
        <dbReference type="ChEBI" id="CHEBI:30413"/>
        <note>ligand shared with second transmembrane subunit</note>
    </ligand>
    <ligandPart>
        <name>Fe</name>
        <dbReference type="ChEBI" id="CHEBI:18248"/>
    </ligandPart>
</feature>
<feature type="binding site" evidence="1">
    <location>
        <position position="90"/>
    </location>
    <ligand>
        <name>a ubiquinone</name>
        <dbReference type="ChEBI" id="CHEBI:16389"/>
    </ligand>
</feature>
<accession>Q59660</accession>